<dbReference type="EMBL" id="CP000633">
    <property type="protein sequence ID" value="ACM36314.1"/>
    <property type="molecule type" value="Genomic_DNA"/>
</dbReference>
<dbReference type="RefSeq" id="WP_015915737.1">
    <property type="nucleotide sequence ID" value="NC_011989.1"/>
</dbReference>
<dbReference type="SMR" id="B9JVN4"/>
<dbReference type="STRING" id="311402.Avi_1835"/>
<dbReference type="KEGG" id="avi:Avi_1835"/>
<dbReference type="eggNOG" id="COG0480">
    <property type="taxonomic scope" value="Bacteria"/>
</dbReference>
<dbReference type="HOGENOM" id="CLU_002794_4_1_5"/>
<dbReference type="Proteomes" id="UP000001596">
    <property type="component" value="Chromosome 1"/>
</dbReference>
<dbReference type="GO" id="GO:0005737">
    <property type="term" value="C:cytoplasm"/>
    <property type="evidence" value="ECO:0007669"/>
    <property type="project" value="UniProtKB-SubCell"/>
</dbReference>
<dbReference type="GO" id="GO:0005525">
    <property type="term" value="F:GTP binding"/>
    <property type="evidence" value="ECO:0007669"/>
    <property type="project" value="UniProtKB-UniRule"/>
</dbReference>
<dbReference type="GO" id="GO:0003924">
    <property type="term" value="F:GTPase activity"/>
    <property type="evidence" value="ECO:0007669"/>
    <property type="project" value="InterPro"/>
</dbReference>
<dbReference type="GO" id="GO:0097216">
    <property type="term" value="F:guanosine tetraphosphate binding"/>
    <property type="evidence" value="ECO:0007669"/>
    <property type="project" value="UniProtKB-ARBA"/>
</dbReference>
<dbReference type="GO" id="GO:0003746">
    <property type="term" value="F:translation elongation factor activity"/>
    <property type="evidence" value="ECO:0007669"/>
    <property type="project" value="UniProtKB-UniRule"/>
</dbReference>
<dbReference type="GO" id="GO:0032790">
    <property type="term" value="P:ribosome disassembly"/>
    <property type="evidence" value="ECO:0007669"/>
    <property type="project" value="TreeGrafter"/>
</dbReference>
<dbReference type="CDD" id="cd01886">
    <property type="entry name" value="EF-G"/>
    <property type="match status" value="1"/>
</dbReference>
<dbReference type="CDD" id="cd16262">
    <property type="entry name" value="EFG_III"/>
    <property type="match status" value="1"/>
</dbReference>
<dbReference type="CDD" id="cd01434">
    <property type="entry name" value="EFG_mtEFG1_IV"/>
    <property type="match status" value="1"/>
</dbReference>
<dbReference type="CDD" id="cd03713">
    <property type="entry name" value="EFG_mtEFG_C"/>
    <property type="match status" value="1"/>
</dbReference>
<dbReference type="CDD" id="cd04088">
    <property type="entry name" value="EFG_mtEFG_II"/>
    <property type="match status" value="1"/>
</dbReference>
<dbReference type="FunFam" id="2.40.30.10:FF:000006">
    <property type="entry name" value="Elongation factor G"/>
    <property type="match status" value="1"/>
</dbReference>
<dbReference type="FunFam" id="3.30.230.10:FF:000003">
    <property type="entry name" value="Elongation factor G"/>
    <property type="match status" value="1"/>
</dbReference>
<dbReference type="FunFam" id="3.30.70.240:FF:000001">
    <property type="entry name" value="Elongation factor G"/>
    <property type="match status" value="1"/>
</dbReference>
<dbReference type="FunFam" id="3.30.70.870:FF:000001">
    <property type="entry name" value="Elongation factor G"/>
    <property type="match status" value="1"/>
</dbReference>
<dbReference type="FunFam" id="3.40.50.300:FF:000029">
    <property type="entry name" value="Elongation factor G"/>
    <property type="match status" value="1"/>
</dbReference>
<dbReference type="Gene3D" id="3.30.230.10">
    <property type="match status" value="1"/>
</dbReference>
<dbReference type="Gene3D" id="3.30.70.240">
    <property type="match status" value="1"/>
</dbReference>
<dbReference type="Gene3D" id="3.30.70.870">
    <property type="entry name" value="Elongation Factor G (Translational Gtpase), domain 3"/>
    <property type="match status" value="1"/>
</dbReference>
<dbReference type="Gene3D" id="3.40.50.300">
    <property type="entry name" value="P-loop containing nucleotide triphosphate hydrolases"/>
    <property type="match status" value="1"/>
</dbReference>
<dbReference type="Gene3D" id="2.40.30.10">
    <property type="entry name" value="Translation factors"/>
    <property type="match status" value="1"/>
</dbReference>
<dbReference type="HAMAP" id="MF_00054_B">
    <property type="entry name" value="EF_G_EF_2_B"/>
    <property type="match status" value="1"/>
</dbReference>
<dbReference type="InterPro" id="IPR041095">
    <property type="entry name" value="EFG_II"/>
</dbReference>
<dbReference type="InterPro" id="IPR009022">
    <property type="entry name" value="EFG_III"/>
</dbReference>
<dbReference type="InterPro" id="IPR035647">
    <property type="entry name" value="EFG_III/V"/>
</dbReference>
<dbReference type="InterPro" id="IPR047872">
    <property type="entry name" value="EFG_IV"/>
</dbReference>
<dbReference type="InterPro" id="IPR035649">
    <property type="entry name" value="EFG_V"/>
</dbReference>
<dbReference type="InterPro" id="IPR000640">
    <property type="entry name" value="EFG_V-like"/>
</dbReference>
<dbReference type="InterPro" id="IPR004161">
    <property type="entry name" value="EFTu-like_2"/>
</dbReference>
<dbReference type="InterPro" id="IPR031157">
    <property type="entry name" value="G_TR_CS"/>
</dbReference>
<dbReference type="InterPro" id="IPR027417">
    <property type="entry name" value="P-loop_NTPase"/>
</dbReference>
<dbReference type="InterPro" id="IPR020568">
    <property type="entry name" value="Ribosomal_Su5_D2-typ_SF"/>
</dbReference>
<dbReference type="InterPro" id="IPR014721">
    <property type="entry name" value="Ribsml_uS5_D2-typ_fold_subgr"/>
</dbReference>
<dbReference type="InterPro" id="IPR005225">
    <property type="entry name" value="Small_GTP-bd"/>
</dbReference>
<dbReference type="InterPro" id="IPR000795">
    <property type="entry name" value="T_Tr_GTP-bd_dom"/>
</dbReference>
<dbReference type="InterPro" id="IPR009000">
    <property type="entry name" value="Transl_B-barrel_sf"/>
</dbReference>
<dbReference type="InterPro" id="IPR004540">
    <property type="entry name" value="Transl_elong_EFG/EF2"/>
</dbReference>
<dbReference type="InterPro" id="IPR005517">
    <property type="entry name" value="Transl_elong_EFG/EF2_IV"/>
</dbReference>
<dbReference type="NCBIfam" id="TIGR00484">
    <property type="entry name" value="EF-G"/>
    <property type="match status" value="1"/>
</dbReference>
<dbReference type="NCBIfam" id="NF009381">
    <property type="entry name" value="PRK12740.1-5"/>
    <property type="match status" value="1"/>
</dbReference>
<dbReference type="NCBIfam" id="TIGR00231">
    <property type="entry name" value="small_GTP"/>
    <property type="match status" value="1"/>
</dbReference>
<dbReference type="PANTHER" id="PTHR43261:SF1">
    <property type="entry name" value="RIBOSOME-RELEASING FACTOR 2, MITOCHONDRIAL"/>
    <property type="match status" value="1"/>
</dbReference>
<dbReference type="PANTHER" id="PTHR43261">
    <property type="entry name" value="TRANSLATION ELONGATION FACTOR G-RELATED"/>
    <property type="match status" value="1"/>
</dbReference>
<dbReference type="Pfam" id="PF00679">
    <property type="entry name" value="EFG_C"/>
    <property type="match status" value="1"/>
</dbReference>
<dbReference type="Pfam" id="PF14492">
    <property type="entry name" value="EFG_III"/>
    <property type="match status" value="1"/>
</dbReference>
<dbReference type="Pfam" id="PF03764">
    <property type="entry name" value="EFG_IV"/>
    <property type="match status" value="1"/>
</dbReference>
<dbReference type="Pfam" id="PF00009">
    <property type="entry name" value="GTP_EFTU"/>
    <property type="match status" value="1"/>
</dbReference>
<dbReference type="Pfam" id="PF03144">
    <property type="entry name" value="GTP_EFTU_D2"/>
    <property type="match status" value="1"/>
</dbReference>
<dbReference type="PRINTS" id="PR00315">
    <property type="entry name" value="ELONGATNFCT"/>
</dbReference>
<dbReference type="SMART" id="SM00838">
    <property type="entry name" value="EFG_C"/>
    <property type="match status" value="1"/>
</dbReference>
<dbReference type="SMART" id="SM00889">
    <property type="entry name" value="EFG_IV"/>
    <property type="match status" value="1"/>
</dbReference>
<dbReference type="SUPFAM" id="SSF54980">
    <property type="entry name" value="EF-G C-terminal domain-like"/>
    <property type="match status" value="2"/>
</dbReference>
<dbReference type="SUPFAM" id="SSF52540">
    <property type="entry name" value="P-loop containing nucleoside triphosphate hydrolases"/>
    <property type="match status" value="1"/>
</dbReference>
<dbReference type="SUPFAM" id="SSF54211">
    <property type="entry name" value="Ribosomal protein S5 domain 2-like"/>
    <property type="match status" value="1"/>
</dbReference>
<dbReference type="SUPFAM" id="SSF50447">
    <property type="entry name" value="Translation proteins"/>
    <property type="match status" value="1"/>
</dbReference>
<dbReference type="PROSITE" id="PS00301">
    <property type="entry name" value="G_TR_1"/>
    <property type="match status" value="1"/>
</dbReference>
<dbReference type="PROSITE" id="PS51722">
    <property type="entry name" value="G_TR_2"/>
    <property type="match status" value="1"/>
</dbReference>
<reference key="1">
    <citation type="journal article" date="2009" name="J. Bacteriol.">
        <title>Genome sequences of three Agrobacterium biovars help elucidate the evolution of multichromosome genomes in bacteria.</title>
        <authorList>
            <person name="Slater S.C."/>
            <person name="Goldman B.S."/>
            <person name="Goodner B."/>
            <person name="Setubal J.C."/>
            <person name="Farrand S.K."/>
            <person name="Nester E.W."/>
            <person name="Burr T.J."/>
            <person name="Banta L."/>
            <person name="Dickerman A.W."/>
            <person name="Paulsen I."/>
            <person name="Otten L."/>
            <person name="Suen G."/>
            <person name="Welch R."/>
            <person name="Almeida N.F."/>
            <person name="Arnold F."/>
            <person name="Burton O.T."/>
            <person name="Du Z."/>
            <person name="Ewing A."/>
            <person name="Godsy E."/>
            <person name="Heisel S."/>
            <person name="Houmiel K.L."/>
            <person name="Jhaveri J."/>
            <person name="Lu J."/>
            <person name="Miller N.M."/>
            <person name="Norton S."/>
            <person name="Chen Q."/>
            <person name="Phoolcharoen W."/>
            <person name="Ohlin V."/>
            <person name="Ondrusek D."/>
            <person name="Pride N."/>
            <person name="Stricklin S.L."/>
            <person name="Sun J."/>
            <person name="Wheeler C."/>
            <person name="Wilson L."/>
            <person name="Zhu H."/>
            <person name="Wood D.W."/>
        </authorList>
    </citation>
    <scope>NUCLEOTIDE SEQUENCE [LARGE SCALE GENOMIC DNA]</scope>
    <source>
        <strain>ATCC BAA-846 / DSM 112012 / S4</strain>
    </source>
</reference>
<keyword id="KW-0963">Cytoplasm</keyword>
<keyword id="KW-0251">Elongation factor</keyword>
<keyword id="KW-0342">GTP-binding</keyword>
<keyword id="KW-0547">Nucleotide-binding</keyword>
<keyword id="KW-0648">Protein biosynthesis</keyword>
<keyword id="KW-1185">Reference proteome</keyword>
<accession>B9JVN4</accession>
<proteinExistence type="inferred from homology"/>
<name>EFG_ALLAM</name>
<gene>
    <name evidence="1" type="primary">fusA</name>
    <name type="ordered locus">Avi_1835</name>
</gene>
<sequence length="699" mass="77860">MAREYKIEDYRNFGIMAHIDAGKTTTTERILYYTGKSHKIGEVHDGAATMDWMEQEQERGITITSAATTTYWKGRDGKMRRFNIIDTPGHVDFTIEVERSLRVLDGAIALLDANAGVEPQTETVWRQAEKYNVPRMIFCNKMDKTGADFYRSVEMIKTRLGATAVVMQLPIGAETEFKGVVDLIEMNALVWRDESLGAAWDVTEIPDDLKEKAVEYREKLIETVVEIDEQAMEDYLNGIMPDNDKIRALVRQGTIEVKFHPMFCGTAFKNKGVQPLLDAVCEYLPSPLDIPAIKGIDVKTDGEIERHPDDAEPLSMLAFKIMNDPFVGSLTFCRIYSGKLEKGASVMNTVKEKRERVGRMLQMHSNSREDIEEAFAGDIVALAGLKESTTGDTLCDPLNQVILERMEFPEPVIQIAIEPKTKGDQEKMGLALNRLAAEDPSFRVKTDQESGQTIIAGMGELHLDIIVDRMRREFKVEATVGAPQVAYRETITRQHEEDYTHKKQSGGTGQFARVKIIFEPNPEGDEFKFDSKIVGGSVPKEYIPGVQKGIESVLSSGPLAGFPMLGVKATLIDGAYHDVDSSVLAFEIASRACFREAAKKAGAQLLEPMMKVEVVTPEDYVGDVIGDLNSRRGQIQGQESRGIAVVINAHVPLANMFKYVDNLRSMSQGRAQYSMVFDHYSPVPSNVAAEIQAKYSGQK</sequence>
<feature type="chain" id="PRO_1000201427" description="Elongation factor G">
    <location>
        <begin position="1"/>
        <end position="699"/>
    </location>
</feature>
<feature type="domain" description="tr-type G">
    <location>
        <begin position="8"/>
        <end position="288"/>
    </location>
</feature>
<feature type="binding site" evidence="1">
    <location>
        <begin position="17"/>
        <end position="24"/>
    </location>
    <ligand>
        <name>GTP</name>
        <dbReference type="ChEBI" id="CHEBI:37565"/>
    </ligand>
</feature>
<feature type="binding site" evidence="1">
    <location>
        <begin position="86"/>
        <end position="90"/>
    </location>
    <ligand>
        <name>GTP</name>
        <dbReference type="ChEBI" id="CHEBI:37565"/>
    </ligand>
</feature>
<feature type="binding site" evidence="1">
    <location>
        <begin position="140"/>
        <end position="143"/>
    </location>
    <ligand>
        <name>GTP</name>
        <dbReference type="ChEBI" id="CHEBI:37565"/>
    </ligand>
</feature>
<evidence type="ECO:0000255" key="1">
    <source>
        <dbReference type="HAMAP-Rule" id="MF_00054"/>
    </source>
</evidence>
<organism>
    <name type="scientific">Allorhizobium ampelinum (strain ATCC BAA-846 / DSM 112012 / S4)</name>
    <name type="common">Agrobacterium vitis (strain S4)</name>
    <dbReference type="NCBI Taxonomy" id="311402"/>
    <lineage>
        <taxon>Bacteria</taxon>
        <taxon>Pseudomonadati</taxon>
        <taxon>Pseudomonadota</taxon>
        <taxon>Alphaproteobacteria</taxon>
        <taxon>Hyphomicrobiales</taxon>
        <taxon>Rhizobiaceae</taxon>
        <taxon>Rhizobium/Agrobacterium group</taxon>
        <taxon>Allorhizobium</taxon>
        <taxon>Allorhizobium ampelinum</taxon>
    </lineage>
</organism>
<comment type="function">
    <text evidence="1">Catalyzes the GTP-dependent ribosomal translocation step during translation elongation. During this step, the ribosome changes from the pre-translocational (PRE) to the post-translocational (POST) state as the newly formed A-site-bound peptidyl-tRNA and P-site-bound deacylated tRNA move to the P and E sites, respectively. Catalyzes the coordinated movement of the two tRNA molecules, the mRNA and conformational changes in the ribosome.</text>
</comment>
<comment type="subcellular location">
    <subcellularLocation>
        <location evidence="1">Cytoplasm</location>
    </subcellularLocation>
</comment>
<comment type="similarity">
    <text evidence="1">Belongs to the TRAFAC class translation factor GTPase superfamily. Classic translation factor GTPase family. EF-G/EF-2 subfamily.</text>
</comment>
<protein>
    <recommendedName>
        <fullName evidence="1">Elongation factor G</fullName>
        <shortName evidence="1">EF-G</shortName>
    </recommendedName>
</protein>